<feature type="chain" id="PRO_1000131780" description="Pole-localizer protein TmaR">
    <location>
        <begin position="1"/>
        <end position="105"/>
    </location>
</feature>
<feature type="coiled-coil region" evidence="1">
    <location>
        <begin position="22"/>
        <end position="42"/>
    </location>
</feature>
<feature type="coiled-coil region" evidence="1">
    <location>
        <begin position="77"/>
        <end position="104"/>
    </location>
</feature>
<evidence type="ECO:0000255" key="1">
    <source>
        <dbReference type="HAMAP-Rule" id="MF_00683"/>
    </source>
</evidence>
<reference key="1">
    <citation type="submission" date="2008-04" db="EMBL/GenBank/DDBJ databases">
        <title>Complete sequence of Yersinia pseudotuberculosis PB1/+.</title>
        <authorList>
            <person name="Copeland A."/>
            <person name="Lucas S."/>
            <person name="Lapidus A."/>
            <person name="Glavina del Rio T."/>
            <person name="Dalin E."/>
            <person name="Tice H."/>
            <person name="Bruce D."/>
            <person name="Goodwin L."/>
            <person name="Pitluck S."/>
            <person name="Munk A.C."/>
            <person name="Brettin T."/>
            <person name="Detter J.C."/>
            <person name="Han C."/>
            <person name="Tapia R."/>
            <person name="Schmutz J."/>
            <person name="Larimer F."/>
            <person name="Land M."/>
            <person name="Hauser L."/>
            <person name="Challacombe J.F."/>
            <person name="Green L."/>
            <person name="Lindler L.E."/>
            <person name="Nikolich M.P."/>
            <person name="Richardson P."/>
        </authorList>
    </citation>
    <scope>NUCLEOTIDE SEQUENCE [LARGE SCALE GENOMIC DNA]</scope>
    <source>
        <strain>PB1/+</strain>
    </source>
</reference>
<keyword id="KW-0175">Coiled coil</keyword>
<keyword id="KW-0963">Cytoplasm</keyword>
<dbReference type="EMBL" id="CP001048">
    <property type="protein sequence ID" value="ACC88652.1"/>
    <property type="molecule type" value="Genomic_DNA"/>
</dbReference>
<dbReference type="SMR" id="B2JZP2"/>
<dbReference type="KEGG" id="ypb:YPTS_1683"/>
<dbReference type="PATRIC" id="fig|502801.10.peg.1056"/>
<dbReference type="GO" id="GO:0005829">
    <property type="term" value="C:cytosol"/>
    <property type="evidence" value="ECO:0007669"/>
    <property type="project" value="TreeGrafter"/>
</dbReference>
<dbReference type="HAMAP" id="MF_00683">
    <property type="entry name" value="Pole_loc_TmaR"/>
    <property type="match status" value="1"/>
</dbReference>
<dbReference type="InterPro" id="IPR007458">
    <property type="entry name" value="DUF496"/>
</dbReference>
<dbReference type="InterPro" id="IPR053375">
    <property type="entry name" value="UPF0265"/>
</dbReference>
<dbReference type="NCBIfam" id="NF003844">
    <property type="entry name" value="PRK05423.1"/>
    <property type="match status" value="1"/>
</dbReference>
<dbReference type="NCBIfam" id="NF040881">
    <property type="entry name" value="PTS_reg_TmaR"/>
    <property type="match status" value="1"/>
</dbReference>
<dbReference type="PANTHER" id="PTHR39591">
    <property type="entry name" value="UPF0265 PROTEIN YEEX"/>
    <property type="match status" value="1"/>
</dbReference>
<dbReference type="PANTHER" id="PTHR39591:SF1">
    <property type="entry name" value="UPF0265 PROTEIN YEEX"/>
    <property type="match status" value="1"/>
</dbReference>
<dbReference type="Pfam" id="PF04363">
    <property type="entry name" value="DUF496"/>
    <property type="match status" value="1"/>
</dbReference>
<dbReference type="PIRSF" id="PIRSF028773">
    <property type="entry name" value="UCP028773"/>
    <property type="match status" value="1"/>
</dbReference>
<protein>
    <recommendedName>
        <fullName evidence="1">Pole-localizer protein TmaR</fullName>
    </recommendedName>
</protein>
<gene>
    <name evidence="1" type="primary">tmaR</name>
    <name type="ordered locus">YPTS_1683</name>
</gene>
<sequence length="105" mass="12461">MDNASKPTFQDVLEFVRMFRRKNKLQREIVDNEKKIRDNQKRVLLLDNLSEYIKPGMSIEEVQAIIANMRGDYEDRVDDYIIKNADLSKERRELSKKLKAMGEVK</sequence>
<name>TMAR_YERPB</name>
<proteinExistence type="inferred from homology"/>
<comment type="function">
    <text evidence="1">Pole-localizer protein involved in the regulation of several cellular processes.</text>
</comment>
<comment type="subcellular location">
    <subcellularLocation>
        <location evidence="1">Cytoplasm</location>
    </subcellularLocation>
</comment>
<comment type="similarity">
    <text evidence="1">Belongs to the pole-localizer TmaR family.</text>
</comment>
<organism>
    <name type="scientific">Yersinia pseudotuberculosis serotype IB (strain PB1/+)</name>
    <dbReference type="NCBI Taxonomy" id="502801"/>
    <lineage>
        <taxon>Bacteria</taxon>
        <taxon>Pseudomonadati</taxon>
        <taxon>Pseudomonadota</taxon>
        <taxon>Gammaproteobacteria</taxon>
        <taxon>Enterobacterales</taxon>
        <taxon>Yersiniaceae</taxon>
        <taxon>Yersinia</taxon>
    </lineage>
</organism>
<accession>B2JZP2</accession>